<reference key="1">
    <citation type="journal article" date="2008" name="J. Bacteriol.">
        <title>Insights into the environmental resistance gene pool from the genome sequence of the multidrug-resistant environmental isolate Escherichia coli SMS-3-5.</title>
        <authorList>
            <person name="Fricke W.F."/>
            <person name="Wright M.S."/>
            <person name="Lindell A.H."/>
            <person name="Harkins D.M."/>
            <person name="Baker-Austin C."/>
            <person name="Ravel J."/>
            <person name="Stepanauskas R."/>
        </authorList>
    </citation>
    <scope>NUCLEOTIDE SEQUENCE [LARGE SCALE GENOMIC DNA]</scope>
    <source>
        <strain>SMS-3-5 / SECEC</strain>
    </source>
</reference>
<gene>
    <name evidence="1" type="primary">rutF</name>
    <name type="ordered locus">EcSMS35_2118</name>
</gene>
<feature type="chain" id="PRO_0000403006" description="FMN reductase (NADH) RutF">
    <location>
        <begin position="1"/>
        <end position="164"/>
    </location>
</feature>
<proteinExistence type="inferred from homology"/>
<keyword id="KW-0285">Flavoprotein</keyword>
<keyword id="KW-0288">FMN</keyword>
<keyword id="KW-0520">NAD</keyword>
<keyword id="KW-0560">Oxidoreductase</keyword>
<accession>B1LIZ8</accession>
<organism>
    <name type="scientific">Escherichia coli (strain SMS-3-5 / SECEC)</name>
    <dbReference type="NCBI Taxonomy" id="439855"/>
    <lineage>
        <taxon>Bacteria</taxon>
        <taxon>Pseudomonadati</taxon>
        <taxon>Pseudomonadota</taxon>
        <taxon>Gammaproteobacteria</taxon>
        <taxon>Enterobacterales</taxon>
        <taxon>Enterobacteriaceae</taxon>
        <taxon>Escherichia</taxon>
    </lineage>
</organism>
<comment type="function">
    <text evidence="1">Catalyzes the reduction of FMN to FMNH2 which is used to reduce pyrimidine by RutA via the Rut pathway.</text>
</comment>
<comment type="catalytic activity">
    <reaction evidence="1">
        <text>FMNH2 + NAD(+) = FMN + NADH + 2 H(+)</text>
        <dbReference type="Rhea" id="RHEA:21620"/>
        <dbReference type="ChEBI" id="CHEBI:15378"/>
        <dbReference type="ChEBI" id="CHEBI:57540"/>
        <dbReference type="ChEBI" id="CHEBI:57618"/>
        <dbReference type="ChEBI" id="CHEBI:57945"/>
        <dbReference type="ChEBI" id="CHEBI:58210"/>
        <dbReference type="EC" id="1.5.1.42"/>
    </reaction>
</comment>
<comment type="induction">
    <text evidence="1">Up-regulated by the nitrogen regulatory protein C (NtrC also called GlnG) and repressed by RutR.</text>
</comment>
<comment type="similarity">
    <text evidence="1">Belongs to the non-flavoprotein flavin reductase family. RutF subfamily.</text>
</comment>
<sequence length="164" mass="17747">MNIVDQQTFRDAMSCMGAAVNIITTDGPAGRAGFTASAVCSVTDTPPTLLVCLNRGASVWPVFNENRTLCVNTLSAGQEPLSNLFGGKTPMEHRFAAARWQTGVTGCPQLEEALVSFDCRISQVVSVGTHDILFCAIEAIHRHATPYGLVWFDRSYHALMRPAC</sequence>
<protein>
    <recommendedName>
        <fullName evidence="1">FMN reductase (NADH) RutF</fullName>
        <ecNumber evidence="1">1.5.1.42</ecNumber>
    </recommendedName>
    <alternativeName>
        <fullName evidence="1">FMN reductase</fullName>
    </alternativeName>
    <alternativeName>
        <fullName evidence="1">NADH-flavin reductase RutF</fullName>
    </alternativeName>
    <alternativeName>
        <fullName evidence="1">NADH:flavin oxidoreductase</fullName>
    </alternativeName>
</protein>
<evidence type="ECO:0000255" key="1">
    <source>
        <dbReference type="HAMAP-Rule" id="MF_00833"/>
    </source>
</evidence>
<dbReference type="EC" id="1.5.1.42" evidence="1"/>
<dbReference type="EMBL" id="CP000970">
    <property type="protein sequence ID" value="ACB16379.1"/>
    <property type="molecule type" value="Genomic_DNA"/>
</dbReference>
<dbReference type="RefSeq" id="WP_001028095.1">
    <property type="nucleotide sequence ID" value="NC_010498.1"/>
</dbReference>
<dbReference type="SMR" id="B1LIZ8"/>
<dbReference type="GeneID" id="75171083"/>
<dbReference type="KEGG" id="ecm:EcSMS35_2118"/>
<dbReference type="HOGENOM" id="CLU_059021_2_2_6"/>
<dbReference type="Proteomes" id="UP000007011">
    <property type="component" value="Chromosome"/>
</dbReference>
<dbReference type="GO" id="GO:0010181">
    <property type="term" value="F:FMN binding"/>
    <property type="evidence" value="ECO:0007669"/>
    <property type="project" value="InterPro"/>
</dbReference>
<dbReference type="GO" id="GO:0052874">
    <property type="term" value="F:FMN reductase (NADH) activity"/>
    <property type="evidence" value="ECO:0007669"/>
    <property type="project" value="UniProtKB-EC"/>
</dbReference>
<dbReference type="GO" id="GO:0008752">
    <property type="term" value="F:FMN reductase [NAD(P)H] activity"/>
    <property type="evidence" value="ECO:0007669"/>
    <property type="project" value="InterPro"/>
</dbReference>
<dbReference type="GO" id="GO:0042602">
    <property type="term" value="F:riboflavin reductase (NADPH) activity"/>
    <property type="evidence" value="ECO:0007669"/>
    <property type="project" value="UniProtKB-UniRule"/>
</dbReference>
<dbReference type="GO" id="GO:0019740">
    <property type="term" value="P:nitrogen utilization"/>
    <property type="evidence" value="ECO:0007669"/>
    <property type="project" value="UniProtKB-UniRule"/>
</dbReference>
<dbReference type="GO" id="GO:0006212">
    <property type="term" value="P:uracil catabolic process"/>
    <property type="evidence" value="ECO:0007669"/>
    <property type="project" value="UniProtKB-UniRule"/>
</dbReference>
<dbReference type="FunFam" id="2.30.110.10:FF:000002">
    <property type="entry name" value="FMN reductase (NADH) RutF"/>
    <property type="match status" value="1"/>
</dbReference>
<dbReference type="Gene3D" id="2.30.110.10">
    <property type="entry name" value="Electron Transport, Fmn-binding Protein, Chain A"/>
    <property type="match status" value="1"/>
</dbReference>
<dbReference type="HAMAP" id="MF_00833">
    <property type="entry name" value="RutF"/>
    <property type="match status" value="1"/>
</dbReference>
<dbReference type="InterPro" id="IPR002563">
    <property type="entry name" value="Flavin_Rdtase-like_dom"/>
</dbReference>
<dbReference type="InterPro" id="IPR050268">
    <property type="entry name" value="NADH-dep_flavin_reductase"/>
</dbReference>
<dbReference type="InterPro" id="IPR019917">
    <property type="entry name" value="RutF"/>
</dbReference>
<dbReference type="InterPro" id="IPR012349">
    <property type="entry name" value="Split_barrel_FMN-bd"/>
</dbReference>
<dbReference type="NCBIfam" id="TIGR03615">
    <property type="entry name" value="RutF"/>
    <property type="match status" value="1"/>
</dbReference>
<dbReference type="PANTHER" id="PTHR30466">
    <property type="entry name" value="FLAVIN REDUCTASE"/>
    <property type="match status" value="1"/>
</dbReference>
<dbReference type="PANTHER" id="PTHR30466:SF1">
    <property type="entry name" value="FMN REDUCTASE (NADH) RUTF"/>
    <property type="match status" value="1"/>
</dbReference>
<dbReference type="Pfam" id="PF01613">
    <property type="entry name" value="Flavin_Reduct"/>
    <property type="match status" value="1"/>
</dbReference>
<dbReference type="SMART" id="SM00903">
    <property type="entry name" value="Flavin_Reduct"/>
    <property type="match status" value="1"/>
</dbReference>
<dbReference type="SUPFAM" id="SSF50475">
    <property type="entry name" value="FMN-binding split barrel"/>
    <property type="match status" value="1"/>
</dbReference>
<name>RUTF_ECOSM</name>